<reference key="1">
    <citation type="submission" date="2003-10" db="EMBL/GenBank/DDBJ databases">
        <title>The complete genome sequence of the alkaliphilic Bacillus clausii KSM-K16.</title>
        <authorList>
            <person name="Takaki Y."/>
            <person name="Kageyama Y."/>
            <person name="Shimamura S."/>
            <person name="Suzuki H."/>
            <person name="Nishi S."/>
            <person name="Hatada Y."/>
            <person name="Kawai S."/>
            <person name="Ito S."/>
            <person name="Horikoshi K."/>
        </authorList>
    </citation>
    <scope>NUCLEOTIDE SEQUENCE [LARGE SCALE GENOMIC DNA]</scope>
    <source>
        <strain>KSM-K16</strain>
    </source>
</reference>
<name>ACPS_SHOC1</name>
<sequence>MIVGIGIDLIELKRIEAAFARQPRFPGRVLTSYEQDQMAQLAPNRQIEYLAGRFAAKEAFAKAKGTGIGAGLSWHDIEIRTEGSGKPYIVVNDDSARVHLSITHSKEYAAAQVVIET</sequence>
<organism>
    <name type="scientific">Shouchella clausii (strain KSM-K16)</name>
    <name type="common">Alkalihalobacillus clausii</name>
    <dbReference type="NCBI Taxonomy" id="66692"/>
    <lineage>
        <taxon>Bacteria</taxon>
        <taxon>Bacillati</taxon>
        <taxon>Bacillota</taxon>
        <taxon>Bacilli</taxon>
        <taxon>Bacillales</taxon>
        <taxon>Bacillaceae</taxon>
        <taxon>Shouchella</taxon>
    </lineage>
</organism>
<dbReference type="EC" id="2.7.8.7" evidence="1"/>
<dbReference type="EMBL" id="AP006627">
    <property type="protein sequence ID" value="BAD63344.1"/>
    <property type="molecule type" value="Genomic_DNA"/>
</dbReference>
<dbReference type="RefSeq" id="WP_011245660.1">
    <property type="nucleotide sequence ID" value="NC_006582.1"/>
</dbReference>
<dbReference type="SMR" id="Q5WJW1"/>
<dbReference type="STRING" id="66692.ABC0805"/>
<dbReference type="KEGG" id="bcl:ABC0805"/>
<dbReference type="eggNOG" id="COG0736">
    <property type="taxonomic scope" value="Bacteria"/>
</dbReference>
<dbReference type="HOGENOM" id="CLU_089696_1_2_9"/>
<dbReference type="OrthoDB" id="517356at2"/>
<dbReference type="Proteomes" id="UP000001168">
    <property type="component" value="Chromosome"/>
</dbReference>
<dbReference type="GO" id="GO:0005829">
    <property type="term" value="C:cytosol"/>
    <property type="evidence" value="ECO:0007669"/>
    <property type="project" value="TreeGrafter"/>
</dbReference>
<dbReference type="GO" id="GO:0008897">
    <property type="term" value="F:holo-[acyl-carrier-protein] synthase activity"/>
    <property type="evidence" value="ECO:0007669"/>
    <property type="project" value="UniProtKB-UniRule"/>
</dbReference>
<dbReference type="GO" id="GO:0000287">
    <property type="term" value="F:magnesium ion binding"/>
    <property type="evidence" value="ECO:0007669"/>
    <property type="project" value="UniProtKB-UniRule"/>
</dbReference>
<dbReference type="GO" id="GO:0006633">
    <property type="term" value="P:fatty acid biosynthetic process"/>
    <property type="evidence" value="ECO:0007669"/>
    <property type="project" value="UniProtKB-UniRule"/>
</dbReference>
<dbReference type="GO" id="GO:0019878">
    <property type="term" value="P:lysine biosynthetic process via aminoadipic acid"/>
    <property type="evidence" value="ECO:0007669"/>
    <property type="project" value="TreeGrafter"/>
</dbReference>
<dbReference type="Gene3D" id="3.90.470.20">
    <property type="entry name" value="4'-phosphopantetheinyl transferase domain"/>
    <property type="match status" value="1"/>
</dbReference>
<dbReference type="HAMAP" id="MF_00101">
    <property type="entry name" value="AcpS"/>
    <property type="match status" value="1"/>
</dbReference>
<dbReference type="InterPro" id="IPR008278">
    <property type="entry name" value="4-PPantetheinyl_Trfase_dom"/>
</dbReference>
<dbReference type="InterPro" id="IPR037143">
    <property type="entry name" value="4-PPantetheinyl_Trfase_dom_sf"/>
</dbReference>
<dbReference type="InterPro" id="IPR002582">
    <property type="entry name" value="ACPS"/>
</dbReference>
<dbReference type="InterPro" id="IPR050559">
    <property type="entry name" value="P-Pant_transferase_sf"/>
</dbReference>
<dbReference type="InterPro" id="IPR004568">
    <property type="entry name" value="Ppantetheine-prot_Trfase_dom"/>
</dbReference>
<dbReference type="NCBIfam" id="TIGR00516">
    <property type="entry name" value="acpS"/>
    <property type="match status" value="1"/>
</dbReference>
<dbReference type="NCBIfam" id="TIGR00556">
    <property type="entry name" value="pantethn_trn"/>
    <property type="match status" value="1"/>
</dbReference>
<dbReference type="PANTHER" id="PTHR12215:SF10">
    <property type="entry name" value="L-AMINOADIPATE-SEMIALDEHYDE DEHYDROGENASE-PHOSPHOPANTETHEINYL TRANSFERASE"/>
    <property type="match status" value="1"/>
</dbReference>
<dbReference type="PANTHER" id="PTHR12215">
    <property type="entry name" value="PHOSPHOPANTETHEINE TRANSFERASE"/>
    <property type="match status" value="1"/>
</dbReference>
<dbReference type="Pfam" id="PF01648">
    <property type="entry name" value="ACPS"/>
    <property type="match status" value="1"/>
</dbReference>
<dbReference type="SUPFAM" id="SSF56214">
    <property type="entry name" value="4'-phosphopantetheinyl transferase"/>
    <property type="match status" value="1"/>
</dbReference>
<proteinExistence type="inferred from homology"/>
<comment type="function">
    <text evidence="1">Transfers the 4'-phosphopantetheine moiety from coenzyme A to a Ser of acyl-carrier-protein.</text>
</comment>
<comment type="catalytic activity">
    <reaction evidence="1">
        <text>apo-[ACP] + CoA = holo-[ACP] + adenosine 3',5'-bisphosphate + H(+)</text>
        <dbReference type="Rhea" id="RHEA:12068"/>
        <dbReference type="Rhea" id="RHEA-COMP:9685"/>
        <dbReference type="Rhea" id="RHEA-COMP:9690"/>
        <dbReference type="ChEBI" id="CHEBI:15378"/>
        <dbReference type="ChEBI" id="CHEBI:29999"/>
        <dbReference type="ChEBI" id="CHEBI:57287"/>
        <dbReference type="ChEBI" id="CHEBI:58343"/>
        <dbReference type="ChEBI" id="CHEBI:64479"/>
        <dbReference type="EC" id="2.7.8.7"/>
    </reaction>
</comment>
<comment type="cofactor">
    <cofactor evidence="1">
        <name>Mg(2+)</name>
        <dbReference type="ChEBI" id="CHEBI:18420"/>
    </cofactor>
</comment>
<comment type="subcellular location">
    <subcellularLocation>
        <location evidence="1">Cytoplasm</location>
    </subcellularLocation>
</comment>
<comment type="similarity">
    <text evidence="1">Belongs to the P-Pant transferase superfamily. AcpS family.</text>
</comment>
<gene>
    <name evidence="1" type="primary">acpS</name>
    <name type="ordered locus">ABC0805</name>
</gene>
<accession>Q5WJW1</accession>
<protein>
    <recommendedName>
        <fullName evidence="1">Holo-[acyl-carrier-protein] synthase</fullName>
        <shortName evidence="1">Holo-ACP synthase</shortName>
        <ecNumber evidence="1">2.7.8.7</ecNumber>
    </recommendedName>
    <alternativeName>
        <fullName evidence="1">4'-phosphopantetheinyl transferase AcpS</fullName>
    </alternativeName>
</protein>
<feature type="chain" id="PRO_0000175612" description="Holo-[acyl-carrier-protein] synthase">
    <location>
        <begin position="1"/>
        <end position="117"/>
    </location>
</feature>
<feature type="binding site" evidence="1">
    <location>
        <position position="8"/>
    </location>
    <ligand>
        <name>Mg(2+)</name>
        <dbReference type="ChEBI" id="CHEBI:18420"/>
    </ligand>
</feature>
<feature type="binding site" evidence="1">
    <location>
        <position position="58"/>
    </location>
    <ligand>
        <name>Mg(2+)</name>
        <dbReference type="ChEBI" id="CHEBI:18420"/>
    </ligand>
</feature>
<keyword id="KW-0963">Cytoplasm</keyword>
<keyword id="KW-0275">Fatty acid biosynthesis</keyword>
<keyword id="KW-0276">Fatty acid metabolism</keyword>
<keyword id="KW-0444">Lipid biosynthesis</keyword>
<keyword id="KW-0443">Lipid metabolism</keyword>
<keyword id="KW-0460">Magnesium</keyword>
<keyword id="KW-0479">Metal-binding</keyword>
<keyword id="KW-1185">Reference proteome</keyword>
<keyword id="KW-0808">Transferase</keyword>
<evidence type="ECO:0000255" key="1">
    <source>
        <dbReference type="HAMAP-Rule" id="MF_00101"/>
    </source>
</evidence>